<protein>
    <recommendedName>
        <fullName evidence="5">Polyamine oxidase 5</fullName>
        <shortName evidence="5">OsPAO5</shortName>
        <ecNumber evidence="3">1.5.3.-</ecNumber>
    </recommendedName>
</protein>
<gene>
    <name evidence="5" type="primary">PAO5</name>
    <name evidence="9" type="ordered locus">Os04g0671300</name>
    <name evidence="6" type="ordered locus">LOC_Os04g57560</name>
    <name evidence="11" type="ORF">OsJ_16579</name>
    <name evidence="10" type="ORF">OSJNBb0004A17.1</name>
</gene>
<reference key="1">
    <citation type="journal article" date="2002" name="Nature">
        <title>Sequence and analysis of rice chromosome 4.</title>
        <authorList>
            <person name="Feng Q."/>
            <person name="Zhang Y."/>
            <person name="Hao P."/>
            <person name="Wang S."/>
            <person name="Fu G."/>
            <person name="Huang Y."/>
            <person name="Li Y."/>
            <person name="Zhu J."/>
            <person name="Liu Y."/>
            <person name="Hu X."/>
            <person name="Jia P."/>
            <person name="Zhang Y."/>
            <person name="Zhao Q."/>
            <person name="Ying K."/>
            <person name="Yu S."/>
            <person name="Tang Y."/>
            <person name="Weng Q."/>
            <person name="Zhang L."/>
            <person name="Lu Y."/>
            <person name="Mu J."/>
            <person name="Lu Y."/>
            <person name="Zhang L.S."/>
            <person name="Yu Z."/>
            <person name="Fan D."/>
            <person name="Liu X."/>
            <person name="Lu T."/>
            <person name="Li C."/>
            <person name="Wu Y."/>
            <person name="Sun T."/>
            <person name="Lei H."/>
            <person name="Li T."/>
            <person name="Hu H."/>
            <person name="Guan J."/>
            <person name="Wu M."/>
            <person name="Zhang R."/>
            <person name="Zhou B."/>
            <person name="Chen Z."/>
            <person name="Chen L."/>
            <person name="Jin Z."/>
            <person name="Wang R."/>
            <person name="Yin H."/>
            <person name="Cai Z."/>
            <person name="Ren S."/>
            <person name="Lv G."/>
            <person name="Gu W."/>
            <person name="Zhu G."/>
            <person name="Tu Y."/>
            <person name="Jia J."/>
            <person name="Zhang Y."/>
            <person name="Chen J."/>
            <person name="Kang H."/>
            <person name="Chen X."/>
            <person name="Shao C."/>
            <person name="Sun Y."/>
            <person name="Hu Q."/>
            <person name="Zhang X."/>
            <person name="Zhang W."/>
            <person name="Wang L."/>
            <person name="Ding C."/>
            <person name="Sheng H."/>
            <person name="Gu J."/>
            <person name="Chen S."/>
            <person name="Ni L."/>
            <person name="Zhu F."/>
            <person name="Chen W."/>
            <person name="Lan L."/>
            <person name="Lai Y."/>
            <person name="Cheng Z."/>
            <person name="Gu M."/>
            <person name="Jiang J."/>
            <person name="Li J."/>
            <person name="Hong G."/>
            <person name="Xue Y."/>
            <person name="Han B."/>
        </authorList>
    </citation>
    <scope>NUCLEOTIDE SEQUENCE [LARGE SCALE GENOMIC DNA]</scope>
    <source>
        <strain>cv. Nipponbare</strain>
    </source>
</reference>
<reference key="2">
    <citation type="journal article" date="2005" name="Nature">
        <title>The map-based sequence of the rice genome.</title>
        <authorList>
            <consortium name="International rice genome sequencing project (IRGSP)"/>
        </authorList>
    </citation>
    <scope>NUCLEOTIDE SEQUENCE [LARGE SCALE GENOMIC DNA]</scope>
    <source>
        <strain>cv. Nipponbare</strain>
    </source>
</reference>
<reference key="3">
    <citation type="journal article" date="2008" name="Nucleic Acids Res.">
        <title>The rice annotation project database (RAP-DB): 2008 update.</title>
        <authorList>
            <consortium name="The rice annotation project (RAP)"/>
        </authorList>
    </citation>
    <scope>GENOME REANNOTATION</scope>
    <source>
        <strain>cv. Nipponbare</strain>
    </source>
</reference>
<reference key="4">
    <citation type="journal article" date="2013" name="Rice">
        <title>Improvement of the Oryza sativa Nipponbare reference genome using next generation sequence and optical map data.</title>
        <authorList>
            <person name="Kawahara Y."/>
            <person name="de la Bastide M."/>
            <person name="Hamilton J.P."/>
            <person name="Kanamori H."/>
            <person name="McCombie W.R."/>
            <person name="Ouyang S."/>
            <person name="Schwartz D.C."/>
            <person name="Tanaka T."/>
            <person name="Wu J."/>
            <person name="Zhou S."/>
            <person name="Childs K.L."/>
            <person name="Davidson R.M."/>
            <person name="Lin H."/>
            <person name="Quesada-Ocampo L."/>
            <person name="Vaillancourt B."/>
            <person name="Sakai H."/>
            <person name="Lee S.S."/>
            <person name="Kim J."/>
            <person name="Numa H."/>
            <person name="Itoh T."/>
            <person name="Buell C.R."/>
            <person name="Matsumoto T."/>
        </authorList>
    </citation>
    <scope>GENOME REANNOTATION</scope>
    <source>
        <strain>cv. Nipponbare</strain>
    </source>
</reference>
<reference key="5">
    <citation type="journal article" date="2005" name="PLoS Biol.">
        <title>The genomes of Oryza sativa: a history of duplications.</title>
        <authorList>
            <person name="Yu J."/>
            <person name="Wang J."/>
            <person name="Lin W."/>
            <person name="Li S."/>
            <person name="Li H."/>
            <person name="Zhou J."/>
            <person name="Ni P."/>
            <person name="Dong W."/>
            <person name="Hu S."/>
            <person name="Zeng C."/>
            <person name="Zhang J."/>
            <person name="Zhang Y."/>
            <person name="Li R."/>
            <person name="Xu Z."/>
            <person name="Li S."/>
            <person name="Li X."/>
            <person name="Zheng H."/>
            <person name="Cong L."/>
            <person name="Lin L."/>
            <person name="Yin J."/>
            <person name="Geng J."/>
            <person name="Li G."/>
            <person name="Shi J."/>
            <person name="Liu J."/>
            <person name="Lv H."/>
            <person name="Li J."/>
            <person name="Wang J."/>
            <person name="Deng Y."/>
            <person name="Ran L."/>
            <person name="Shi X."/>
            <person name="Wang X."/>
            <person name="Wu Q."/>
            <person name="Li C."/>
            <person name="Ren X."/>
            <person name="Wang J."/>
            <person name="Wang X."/>
            <person name="Li D."/>
            <person name="Liu D."/>
            <person name="Zhang X."/>
            <person name="Ji Z."/>
            <person name="Zhao W."/>
            <person name="Sun Y."/>
            <person name="Zhang Z."/>
            <person name="Bao J."/>
            <person name="Han Y."/>
            <person name="Dong L."/>
            <person name="Ji J."/>
            <person name="Chen P."/>
            <person name="Wu S."/>
            <person name="Liu J."/>
            <person name="Xiao Y."/>
            <person name="Bu D."/>
            <person name="Tan J."/>
            <person name="Yang L."/>
            <person name="Ye C."/>
            <person name="Zhang J."/>
            <person name="Xu J."/>
            <person name="Zhou Y."/>
            <person name="Yu Y."/>
            <person name="Zhang B."/>
            <person name="Zhuang S."/>
            <person name="Wei H."/>
            <person name="Liu B."/>
            <person name="Lei M."/>
            <person name="Yu H."/>
            <person name="Li Y."/>
            <person name="Xu H."/>
            <person name="Wei S."/>
            <person name="He X."/>
            <person name="Fang L."/>
            <person name="Zhang Z."/>
            <person name="Zhang Y."/>
            <person name="Huang X."/>
            <person name="Su Z."/>
            <person name="Tong W."/>
            <person name="Li J."/>
            <person name="Tong Z."/>
            <person name="Li S."/>
            <person name="Ye J."/>
            <person name="Wang L."/>
            <person name="Fang L."/>
            <person name="Lei T."/>
            <person name="Chen C.-S."/>
            <person name="Chen H.-C."/>
            <person name="Xu Z."/>
            <person name="Li H."/>
            <person name="Huang H."/>
            <person name="Zhang F."/>
            <person name="Xu H."/>
            <person name="Li N."/>
            <person name="Zhao C."/>
            <person name="Li S."/>
            <person name="Dong L."/>
            <person name="Huang Y."/>
            <person name="Li L."/>
            <person name="Xi Y."/>
            <person name="Qi Q."/>
            <person name="Li W."/>
            <person name="Zhang B."/>
            <person name="Hu W."/>
            <person name="Zhang Y."/>
            <person name="Tian X."/>
            <person name="Jiao Y."/>
            <person name="Liang X."/>
            <person name="Jin J."/>
            <person name="Gao L."/>
            <person name="Zheng W."/>
            <person name="Hao B."/>
            <person name="Liu S.-M."/>
            <person name="Wang W."/>
            <person name="Yuan L."/>
            <person name="Cao M."/>
            <person name="McDermott J."/>
            <person name="Samudrala R."/>
            <person name="Wang J."/>
            <person name="Wong G.K.-S."/>
            <person name="Yang H."/>
        </authorList>
    </citation>
    <scope>NUCLEOTIDE SEQUENCE [LARGE SCALE GENOMIC DNA]</scope>
    <source>
        <strain>cv. Nipponbare</strain>
    </source>
</reference>
<reference key="6">
    <citation type="journal article" date="2003" name="Science">
        <title>Collection, mapping, and annotation of over 28,000 cDNA clones from japonica rice.</title>
        <authorList>
            <consortium name="The rice full-length cDNA consortium"/>
        </authorList>
    </citation>
    <scope>NUCLEOTIDE SEQUENCE [LARGE SCALE MRNA]</scope>
    <source>
        <strain>cv. Nipponbare</strain>
    </source>
</reference>
<reference key="7">
    <citation type="journal article" date="2012" name="Amino Acids">
        <title>Constitutively and highly expressed Oryza sativa polyamine oxidases localize in peroxisomes and catalyze polyamine back conversion.</title>
        <authorList>
            <person name="Ono Y."/>
            <person name="Kim D.W."/>
            <person name="Watanabe K."/>
            <person name="Sasaki A."/>
            <person name="Niitsu M."/>
            <person name="Berberich T."/>
            <person name="Kusano T."/>
            <person name="Takahashi Y."/>
        </authorList>
    </citation>
    <scope>FUNCTION</scope>
    <scope>CATALYTIC ACTIVITY</scope>
    <scope>COFACTOR</scope>
    <scope>SUBCELLULAR LOCATION</scope>
</reference>
<reference key="8">
    <citation type="journal article" date="2016" name="Front. Plant Sci.">
        <title>Involvement of polyamine oxidase-produced hydrogen peroxide during coleorhiza-limited germination of rice seeds.</title>
        <authorList>
            <person name="Chen B.X."/>
            <person name="Li W.Y."/>
            <person name="Gao Y.T."/>
            <person name="Chen Z.J."/>
            <person name="Zhang W.N."/>
            <person name="Liu Q.J."/>
            <person name="Chen Z."/>
            <person name="Liu J."/>
        </authorList>
    </citation>
    <scope>FUNCTION</scope>
    <scope>DEVELOPMENTAL STAGE</scope>
</reference>
<keyword id="KW-0274">FAD</keyword>
<keyword id="KW-0285">Flavoprotein</keyword>
<keyword id="KW-0560">Oxidoreductase</keyword>
<keyword id="KW-0576">Peroxisome</keyword>
<keyword id="KW-1185">Reference proteome</keyword>
<dbReference type="EC" id="1.5.3.-" evidence="3"/>
<dbReference type="EMBL" id="AL606652">
    <property type="protein sequence ID" value="CAE03599.2"/>
    <property type="status" value="ALT_SEQ"/>
    <property type="molecule type" value="Genomic_DNA"/>
</dbReference>
<dbReference type="EMBL" id="AP008210">
    <property type="protein sequence ID" value="BAF16133.1"/>
    <property type="molecule type" value="Genomic_DNA"/>
</dbReference>
<dbReference type="EMBL" id="AP014960">
    <property type="protein sequence ID" value="BAS91567.1"/>
    <property type="molecule type" value="Genomic_DNA"/>
</dbReference>
<dbReference type="EMBL" id="CM000141">
    <property type="protein sequence ID" value="EEE61884.1"/>
    <property type="molecule type" value="Genomic_DNA"/>
</dbReference>
<dbReference type="EMBL" id="AK072414">
    <property type="protein sequence ID" value="BAG92960.1"/>
    <property type="molecule type" value="mRNA"/>
</dbReference>
<dbReference type="SMR" id="Q0J954"/>
<dbReference type="FunCoup" id="Q0J954">
    <property type="interactions" value="21"/>
</dbReference>
<dbReference type="STRING" id="39947.Q0J954"/>
<dbReference type="PaxDb" id="39947-Q0J954"/>
<dbReference type="EnsemblPlants" id="Os04t0671300-01">
    <property type="protein sequence ID" value="Os04t0671300-01"/>
    <property type="gene ID" value="Os04g0671300"/>
</dbReference>
<dbReference type="Gramene" id="Os04t0671300-01">
    <property type="protein sequence ID" value="Os04t0671300-01"/>
    <property type="gene ID" value="Os04g0671300"/>
</dbReference>
<dbReference type="KEGG" id="dosa:Os04g0671300"/>
<dbReference type="KEGG" id="osa:4337360"/>
<dbReference type="eggNOG" id="KOG0029">
    <property type="taxonomic scope" value="Eukaryota"/>
</dbReference>
<dbReference type="HOGENOM" id="CLU_004498_10_0_1"/>
<dbReference type="InParanoid" id="Q0J954"/>
<dbReference type="OMA" id="CWDQDEC"/>
<dbReference type="OrthoDB" id="5046242at2759"/>
<dbReference type="UniPathway" id="UPA00211"/>
<dbReference type="Proteomes" id="UP000000763">
    <property type="component" value="Chromosome 4"/>
</dbReference>
<dbReference type="Proteomes" id="UP000007752">
    <property type="component" value="Chromosome 4"/>
</dbReference>
<dbReference type="Proteomes" id="UP000059680">
    <property type="component" value="Chromosome 4"/>
</dbReference>
<dbReference type="GO" id="GO:0005777">
    <property type="term" value="C:peroxisome"/>
    <property type="evidence" value="ECO:0000314"/>
    <property type="project" value="UniProtKB"/>
</dbReference>
<dbReference type="GO" id="GO:0050660">
    <property type="term" value="F:flavin adenine dinucleotide binding"/>
    <property type="evidence" value="ECO:0000314"/>
    <property type="project" value="UniProtKB"/>
</dbReference>
<dbReference type="GO" id="GO:0052901">
    <property type="term" value="F:spermine oxidase activity"/>
    <property type="evidence" value="ECO:0000314"/>
    <property type="project" value="UniProtKB"/>
</dbReference>
<dbReference type="GO" id="GO:1990534">
    <property type="term" value="F:thermospermine oxidase activity"/>
    <property type="evidence" value="ECO:0007669"/>
    <property type="project" value="RHEA"/>
</dbReference>
<dbReference type="GO" id="GO:0046208">
    <property type="term" value="P:spermine catabolic process"/>
    <property type="evidence" value="ECO:0000314"/>
    <property type="project" value="UniProtKB"/>
</dbReference>
<dbReference type="GO" id="GO:1903602">
    <property type="term" value="P:thermospermine catabolic process"/>
    <property type="evidence" value="ECO:0000314"/>
    <property type="project" value="UniProtKB"/>
</dbReference>
<dbReference type="Gene3D" id="3.90.660.10">
    <property type="match status" value="1"/>
</dbReference>
<dbReference type="Gene3D" id="3.50.50.60">
    <property type="entry name" value="FAD/NAD(P)-binding domain"/>
    <property type="match status" value="1"/>
</dbReference>
<dbReference type="InterPro" id="IPR002937">
    <property type="entry name" value="Amino_oxidase"/>
</dbReference>
<dbReference type="InterPro" id="IPR036188">
    <property type="entry name" value="FAD/NAD-bd_sf"/>
</dbReference>
<dbReference type="InterPro" id="IPR001613">
    <property type="entry name" value="Flavin_amine_oxidase"/>
</dbReference>
<dbReference type="InterPro" id="IPR050281">
    <property type="entry name" value="Flavin_monoamine_oxidase"/>
</dbReference>
<dbReference type="PANTHER" id="PTHR10742">
    <property type="entry name" value="FLAVIN MONOAMINE OXIDASE"/>
    <property type="match status" value="1"/>
</dbReference>
<dbReference type="PANTHER" id="PTHR10742:SF228">
    <property type="entry name" value="POLYAMINE OXIDASE 4-RELATED"/>
    <property type="match status" value="1"/>
</dbReference>
<dbReference type="Pfam" id="PF01593">
    <property type="entry name" value="Amino_oxidase"/>
    <property type="match status" value="1"/>
</dbReference>
<dbReference type="PRINTS" id="PR00757">
    <property type="entry name" value="AMINEOXDASEF"/>
</dbReference>
<dbReference type="SUPFAM" id="SSF54373">
    <property type="entry name" value="FAD-linked reductases, C-terminal domain"/>
    <property type="match status" value="1"/>
</dbReference>
<dbReference type="SUPFAM" id="SSF51905">
    <property type="entry name" value="FAD/NAD(P)-binding domain"/>
    <property type="match status" value="1"/>
</dbReference>
<sequence>MDQPSNGFAAGGLFLRHIDGQNASPPSVIVIGGGISGIAAARALSNASFKVTLLESRDRLGGRVHTDYSFGCPIDMGASWLHGVCNENSLAPLIRLLGLRLYRTSGDNSVLYDHDLESYALFDKDGRQVPQEIVTKVGETFEKILKETVKVRAEHEDDMPLIQAISIVLDRNPHLKLDGLQYEVLQWCICRLEAWFATDVDNISLKNWDQEHVLTGGHGLMVHGYDPVIKALAQDLDIHLNHRVTKIIQRYNKTIVCVEDGTSFVADAAIITVPLGVLKANIIKFEPELPDWKLSSISDLGIGIENKIALRFNSVFWPNVEVLGRVAPTSNACGYFLNLHKATGHPVLVCMVAGRFAYEFEKLSDEESVNFVMSQLKKMLPGATEPVQYLVSRWGTDPNSLGSYSCDLVGKPADLYERFCAPVGNLFFAGEAACIDHSGSVHGAYSSGIVAAEDCRRHLSTQLGISDLFQVGKIIMREEMTEVMVPFQISRL</sequence>
<feature type="chain" id="PRO_0000445724" description="Polyamine oxidase 5">
    <location>
        <begin position="1"/>
        <end position="492"/>
    </location>
</feature>
<feature type="short sequence motif" description="Microbody targeting signal" evidence="2">
    <location>
        <begin position="490"/>
        <end position="492"/>
    </location>
</feature>
<feature type="binding site" evidence="1">
    <location>
        <position position="55"/>
    </location>
    <ligand>
        <name>FAD</name>
        <dbReference type="ChEBI" id="CHEBI:57692"/>
    </ligand>
</feature>
<feature type="binding site" evidence="1">
    <location>
        <position position="63"/>
    </location>
    <ligand>
        <name>FAD</name>
        <dbReference type="ChEBI" id="CHEBI:57692"/>
    </ligand>
</feature>
<feature type="binding site" evidence="1">
    <location>
        <position position="244"/>
    </location>
    <ligand>
        <name>FAD</name>
        <dbReference type="ChEBI" id="CHEBI:57692"/>
    </ligand>
</feature>
<feature type="binding site" evidence="1">
    <location>
        <position position="431"/>
    </location>
    <ligand>
        <name>FAD</name>
        <dbReference type="ChEBI" id="CHEBI:57692"/>
    </ligand>
</feature>
<name>PAO5_ORYSJ</name>
<organism>
    <name type="scientific">Oryza sativa subsp. japonica</name>
    <name type="common">Rice</name>
    <dbReference type="NCBI Taxonomy" id="39947"/>
    <lineage>
        <taxon>Eukaryota</taxon>
        <taxon>Viridiplantae</taxon>
        <taxon>Streptophyta</taxon>
        <taxon>Embryophyta</taxon>
        <taxon>Tracheophyta</taxon>
        <taxon>Spermatophyta</taxon>
        <taxon>Magnoliopsida</taxon>
        <taxon>Liliopsida</taxon>
        <taxon>Poales</taxon>
        <taxon>Poaceae</taxon>
        <taxon>BOP clade</taxon>
        <taxon>Oryzoideae</taxon>
        <taxon>Oryzeae</taxon>
        <taxon>Oryzinae</taxon>
        <taxon>Oryza</taxon>
        <taxon>Oryza sativa</taxon>
    </lineage>
</organism>
<comment type="function">
    <text evidence="3 7 8">Flavoenzyme involved in polyamine back-conversion (PubMed:21796433). Catalyzes the oxidation of the secondary amino group of polyamines, such as spermine (PubMed:21796433). Substrate preference is spermine &gt; thermospermine &gt; norspermine (PubMed:21796433). No activity detected when putrescine, spermidine or N(1)-acetylspermidine are used as substrates (PubMed:21796433). Plays an important role in the regulation of polyamine intracellular concentration (Probable). May play a role in producing hydrogen peroxide during seed germination (Probable).</text>
</comment>
<comment type="catalytic activity">
    <reaction evidence="3">
        <text>spermine + O2 + H2O = 3-aminopropanal + spermidine + H2O2</text>
        <dbReference type="Rhea" id="RHEA:25804"/>
        <dbReference type="ChEBI" id="CHEBI:15377"/>
        <dbReference type="ChEBI" id="CHEBI:15379"/>
        <dbReference type="ChEBI" id="CHEBI:16240"/>
        <dbReference type="ChEBI" id="CHEBI:45725"/>
        <dbReference type="ChEBI" id="CHEBI:57834"/>
        <dbReference type="ChEBI" id="CHEBI:58374"/>
    </reaction>
</comment>
<comment type="catalytic activity">
    <reaction evidence="3">
        <text>norspermine + O2 + H2O = norspermidine + 3-aminopropanal + H2O2</text>
        <dbReference type="Rhea" id="RHEA:25816"/>
        <dbReference type="ChEBI" id="CHEBI:15377"/>
        <dbReference type="ChEBI" id="CHEBI:15379"/>
        <dbReference type="ChEBI" id="CHEBI:16240"/>
        <dbReference type="ChEBI" id="CHEBI:57920"/>
        <dbReference type="ChEBI" id="CHEBI:58374"/>
        <dbReference type="ChEBI" id="CHEBI:58704"/>
    </reaction>
</comment>
<comment type="catalytic activity">
    <reaction evidence="3">
        <text>thermospermine + O2 + H2O = 3-aminopropanal + spermidine + H2O2</text>
        <dbReference type="Rhea" id="RHEA:57836"/>
        <dbReference type="ChEBI" id="CHEBI:15377"/>
        <dbReference type="ChEBI" id="CHEBI:15379"/>
        <dbReference type="ChEBI" id="CHEBI:16240"/>
        <dbReference type="ChEBI" id="CHEBI:57834"/>
        <dbReference type="ChEBI" id="CHEBI:58374"/>
        <dbReference type="ChEBI" id="CHEBI:59903"/>
    </reaction>
</comment>
<comment type="cofactor">
    <cofactor evidence="3">
        <name>FAD</name>
        <dbReference type="ChEBI" id="CHEBI:57692"/>
    </cofactor>
    <text evidence="7">Binds 1 FAD per subunit.</text>
</comment>
<comment type="pathway">
    <text evidence="6">Amine and polyamine degradation; spermine degradation.</text>
</comment>
<comment type="subcellular location">
    <subcellularLocation>
        <location evidence="3">Peroxisome</location>
    </subcellularLocation>
</comment>
<comment type="tissue specificity">
    <text evidence="3">Widely expressed.</text>
</comment>
<comment type="developmental stage">
    <text evidence="4">During seed germination, expression increases in the embryo from 3 to 48 hours after seed imbibition, with a peak at 48 hours.</text>
</comment>
<comment type="similarity">
    <text evidence="6">Belongs to the flavin monoamine oxidase family.</text>
</comment>
<comment type="sequence caution" evidence="6">
    <conflict type="erroneous gene model prediction">
        <sequence resource="EMBL-CDS" id="CAE03599"/>
    </conflict>
</comment>
<accession>Q0J954</accession>
<accession>Q7XPI8</accession>
<proteinExistence type="evidence at protein level"/>
<evidence type="ECO:0000250" key="1">
    <source>
        <dbReference type="UniProtKB" id="O64411"/>
    </source>
</evidence>
<evidence type="ECO:0000255" key="2"/>
<evidence type="ECO:0000269" key="3">
    <source>
    </source>
</evidence>
<evidence type="ECO:0000269" key="4">
    <source>
    </source>
</evidence>
<evidence type="ECO:0000303" key="5">
    <source>
    </source>
</evidence>
<evidence type="ECO:0000305" key="6"/>
<evidence type="ECO:0000305" key="7">
    <source>
    </source>
</evidence>
<evidence type="ECO:0000305" key="8">
    <source>
    </source>
</evidence>
<evidence type="ECO:0000312" key="9">
    <source>
        <dbReference type="EMBL" id="BAF16133.1"/>
    </source>
</evidence>
<evidence type="ECO:0000312" key="10">
    <source>
        <dbReference type="EMBL" id="CAE03599.2"/>
    </source>
</evidence>
<evidence type="ECO:0000312" key="11">
    <source>
        <dbReference type="EMBL" id="EEE61884.1"/>
    </source>
</evidence>